<protein>
    <recommendedName>
        <fullName>Phosphatidylglycerophosphatase GEP4, mitochondrial</fullName>
        <ecNumber>3.1.3.27</ecNumber>
    </recommendedName>
    <alternativeName>
        <fullName>Genetic interactor of prohibitins 4</fullName>
    </alternativeName>
    <alternativeName>
        <fullName>PGP phosphatase GEP4</fullName>
    </alternativeName>
</protein>
<reference key="1">
    <citation type="journal article" date="1994" name="Science">
        <title>Complete nucleotide sequence of Saccharomyces cerevisiae chromosome VIII.</title>
        <authorList>
            <person name="Johnston M."/>
            <person name="Andrews S."/>
            <person name="Brinkman R."/>
            <person name="Cooper J."/>
            <person name="Ding H."/>
            <person name="Dover J."/>
            <person name="Du Z."/>
            <person name="Favello A."/>
            <person name="Fulton L."/>
            <person name="Gattung S."/>
            <person name="Geisel C."/>
            <person name="Kirsten J."/>
            <person name="Kucaba T."/>
            <person name="Hillier L.W."/>
            <person name="Jier M."/>
            <person name="Johnston L."/>
            <person name="Langston Y."/>
            <person name="Latreille P."/>
            <person name="Louis E.J."/>
            <person name="Macri C."/>
            <person name="Mardis E."/>
            <person name="Menezes S."/>
            <person name="Mouser L."/>
            <person name="Nhan M."/>
            <person name="Rifkin L."/>
            <person name="Riles L."/>
            <person name="St Peter H."/>
            <person name="Trevaskis E."/>
            <person name="Vaughan K."/>
            <person name="Vignati D."/>
            <person name="Wilcox L."/>
            <person name="Wohldman P."/>
            <person name="Waterston R."/>
            <person name="Wilson R."/>
            <person name="Vaudin M."/>
        </authorList>
    </citation>
    <scope>NUCLEOTIDE SEQUENCE [LARGE SCALE GENOMIC DNA]</scope>
    <source>
        <strain>ATCC 204508 / S288c</strain>
    </source>
</reference>
<reference key="2">
    <citation type="journal article" date="2014" name="G3 (Bethesda)">
        <title>The reference genome sequence of Saccharomyces cerevisiae: Then and now.</title>
        <authorList>
            <person name="Engel S.R."/>
            <person name="Dietrich F.S."/>
            <person name="Fisk D.G."/>
            <person name="Binkley G."/>
            <person name="Balakrishnan R."/>
            <person name="Costanzo M.C."/>
            <person name="Dwight S.S."/>
            <person name="Hitz B.C."/>
            <person name="Karra K."/>
            <person name="Nash R.S."/>
            <person name="Weng S."/>
            <person name="Wong E.D."/>
            <person name="Lloyd P."/>
            <person name="Skrzypek M.S."/>
            <person name="Miyasato S.R."/>
            <person name="Simison M."/>
            <person name="Cherry J.M."/>
        </authorList>
    </citation>
    <scope>GENOME REANNOTATION</scope>
    <source>
        <strain>ATCC 204508 / S288c</strain>
    </source>
</reference>
<reference key="3">
    <citation type="journal article" date="2007" name="Genome Res.">
        <title>Approaching a complete repository of sequence-verified protein-encoding clones for Saccharomyces cerevisiae.</title>
        <authorList>
            <person name="Hu Y."/>
            <person name="Rolfs A."/>
            <person name="Bhullar B."/>
            <person name="Murthy T.V.S."/>
            <person name="Zhu C."/>
            <person name="Berger M.F."/>
            <person name="Camargo A.A."/>
            <person name="Kelley F."/>
            <person name="McCarron S."/>
            <person name="Jepson D."/>
            <person name="Richardson A."/>
            <person name="Raphael J."/>
            <person name="Moreira D."/>
            <person name="Taycher E."/>
            <person name="Zuo D."/>
            <person name="Mohr S."/>
            <person name="Kane M.F."/>
            <person name="Williamson J."/>
            <person name="Simpson A.J.G."/>
            <person name="Bulyk M.L."/>
            <person name="Harlow E."/>
            <person name="Marsischky G."/>
            <person name="Kolodner R.D."/>
            <person name="LaBaer J."/>
        </authorList>
    </citation>
    <scope>NUCLEOTIDE SEQUENCE [GENOMIC DNA]</scope>
    <source>
        <strain>ATCC 204508 / S288c</strain>
    </source>
</reference>
<reference key="4">
    <citation type="journal article" date="2006" name="J. Proteome Res.">
        <title>Toward the complete yeast mitochondrial proteome: multidimensional separation techniques for mitochondrial proteomics.</title>
        <authorList>
            <person name="Reinders J."/>
            <person name="Zahedi R.P."/>
            <person name="Pfanner N."/>
            <person name="Meisinger C."/>
            <person name="Sickmann A."/>
        </authorList>
    </citation>
    <scope>SUBCELLULAR LOCATION [LARGE SCALE ANALYSIS]</scope>
    <scope>IDENTIFICATION BY MASS SPECTROMETRY</scope>
</reference>
<reference key="5">
    <citation type="journal article" date="2009" name="J. Cell Biol.">
        <title>The genetic interactome of prohibitins: coordinated control of cardiolipin and phosphatidylethanolamine by conserved regulators in mitochondria.</title>
        <authorList>
            <person name="Osman C."/>
            <person name="Haag M."/>
            <person name="Potting C."/>
            <person name="Rodenfels J."/>
            <person name="Dip P.V."/>
            <person name="Wieland F.T."/>
            <person name="Brugger B."/>
            <person name="Westermann B."/>
            <person name="Langer T."/>
        </authorList>
    </citation>
    <scope>FUNCTION</scope>
</reference>
<reference key="6">
    <citation type="journal article" date="2010" name="EMBO J.">
        <title>A mitochondrial phosphatase required for cardiolipin biosynthesis: the PGP phosphatase Gep4.</title>
        <authorList>
            <person name="Osman C."/>
            <person name="Haag M."/>
            <person name="Wieland F.T."/>
            <person name="Brugger B."/>
            <person name="Langer T."/>
        </authorList>
    </citation>
    <scope>FUNCTION</scope>
    <scope>SUBCELLULAR LOCATION</scope>
    <scope>MUTAGENESIS OF ASP-45 AND ASP-47</scope>
</reference>
<reference key="7">
    <citation type="journal article" date="2012" name="Proc. Natl. Acad. Sci. U.S.A.">
        <title>N-terminal acetylome analyses and functional insights of the N-terminal acetyltransferase NatB.</title>
        <authorList>
            <person name="Van Damme P."/>
            <person name="Lasa M."/>
            <person name="Polevoda B."/>
            <person name="Gazquez C."/>
            <person name="Elosegui-Artola A."/>
            <person name="Kim D.S."/>
            <person name="De Juan-Pardo E."/>
            <person name="Demeyer K."/>
            <person name="Hole K."/>
            <person name="Larrea E."/>
            <person name="Timmerman E."/>
            <person name="Prieto J."/>
            <person name="Arnesen T."/>
            <person name="Sherman F."/>
            <person name="Gevaert K."/>
            <person name="Aldabe R."/>
        </authorList>
    </citation>
    <scope>IDENTIFICATION BY MASS SPECTROMETRY [LARGE SCALE ANALYSIS]</scope>
</reference>
<dbReference type="EC" id="3.1.3.27"/>
<dbReference type="EMBL" id="U00059">
    <property type="protein sequence ID" value="AAB68862.1"/>
    <property type="molecule type" value="Genomic_DNA"/>
</dbReference>
<dbReference type="EMBL" id="AY692650">
    <property type="protein sequence ID" value="AAT92669.1"/>
    <property type="molecule type" value="Genomic_DNA"/>
</dbReference>
<dbReference type="EMBL" id="BK006934">
    <property type="protein sequence ID" value="DAA06794.1"/>
    <property type="molecule type" value="Genomic_DNA"/>
</dbReference>
<dbReference type="PIR" id="S48943">
    <property type="entry name" value="S48943"/>
</dbReference>
<dbReference type="RefSeq" id="NP_011968.1">
    <property type="nucleotide sequence ID" value="NM_001179230.1"/>
</dbReference>
<dbReference type="SMR" id="P38812"/>
<dbReference type="BioGRID" id="36533">
    <property type="interactions" value="50"/>
</dbReference>
<dbReference type="DIP" id="DIP-1343N"/>
<dbReference type="FunCoup" id="P38812">
    <property type="interactions" value="65"/>
</dbReference>
<dbReference type="IntAct" id="P38812">
    <property type="interactions" value="1"/>
</dbReference>
<dbReference type="MINT" id="P38812"/>
<dbReference type="STRING" id="4932.YHR100C"/>
<dbReference type="SwissLipids" id="SLP:000000061"/>
<dbReference type="SwissLipids" id="SLP:000000220"/>
<dbReference type="iPTMnet" id="P38812"/>
<dbReference type="PaxDb" id="4932-YHR100C"/>
<dbReference type="PeptideAtlas" id="P38812"/>
<dbReference type="EnsemblFungi" id="YHR100C_mRNA">
    <property type="protein sequence ID" value="YHR100C"/>
    <property type="gene ID" value="YHR100C"/>
</dbReference>
<dbReference type="GeneID" id="856500"/>
<dbReference type="KEGG" id="sce:YHR100C"/>
<dbReference type="AGR" id="SGD:S000001142"/>
<dbReference type="SGD" id="S000001142">
    <property type="gene designation" value="GEP4"/>
</dbReference>
<dbReference type="VEuPathDB" id="FungiDB:YHR100C"/>
<dbReference type="eggNOG" id="KOG2961">
    <property type="taxonomic scope" value="Eukaryota"/>
</dbReference>
<dbReference type="HOGENOM" id="CLU_056221_3_2_1"/>
<dbReference type="InParanoid" id="P38812"/>
<dbReference type="OMA" id="MLMANMM"/>
<dbReference type="OrthoDB" id="198652at2759"/>
<dbReference type="BioCyc" id="MetaCyc:G3O-31145-MONOMER"/>
<dbReference type="BioCyc" id="YEAST:G3O-31145-MONOMER"/>
<dbReference type="UniPathway" id="UPA00084">
    <property type="reaction ID" value="UER00504"/>
</dbReference>
<dbReference type="BioGRID-ORCS" id="856500">
    <property type="hits" value="4 hits in 10 CRISPR screens"/>
</dbReference>
<dbReference type="PRO" id="PR:P38812"/>
<dbReference type="Proteomes" id="UP000002311">
    <property type="component" value="Chromosome VIII"/>
</dbReference>
<dbReference type="RNAct" id="P38812">
    <property type="molecule type" value="protein"/>
</dbReference>
<dbReference type="GO" id="GO:0005737">
    <property type="term" value="C:cytoplasm"/>
    <property type="evidence" value="ECO:0000318"/>
    <property type="project" value="GO_Central"/>
</dbReference>
<dbReference type="GO" id="GO:0031314">
    <property type="term" value="C:extrinsic component of mitochondrial inner membrane"/>
    <property type="evidence" value="ECO:0000314"/>
    <property type="project" value="UniProtKB"/>
</dbReference>
<dbReference type="GO" id="GO:0005759">
    <property type="term" value="C:mitochondrial matrix"/>
    <property type="evidence" value="ECO:0000314"/>
    <property type="project" value="SGD"/>
</dbReference>
<dbReference type="GO" id="GO:0005739">
    <property type="term" value="C:mitochondrion"/>
    <property type="evidence" value="ECO:0007005"/>
    <property type="project" value="SGD"/>
</dbReference>
<dbReference type="GO" id="GO:0008962">
    <property type="term" value="F:phosphatidylglycerophosphatase activity"/>
    <property type="evidence" value="ECO:0000314"/>
    <property type="project" value="SGD"/>
</dbReference>
<dbReference type="GO" id="GO:0032049">
    <property type="term" value="P:cardiolipin biosynthetic process"/>
    <property type="evidence" value="ECO:0000315"/>
    <property type="project" value="SGD"/>
</dbReference>
<dbReference type="FunFam" id="3.40.50.1000:FF:000165">
    <property type="entry name" value="HAD superfamily phosphatase"/>
    <property type="match status" value="1"/>
</dbReference>
<dbReference type="Gene3D" id="3.40.50.1000">
    <property type="entry name" value="HAD superfamily/HAD-like"/>
    <property type="match status" value="1"/>
</dbReference>
<dbReference type="InterPro" id="IPR036412">
    <property type="entry name" value="HAD-like_sf"/>
</dbReference>
<dbReference type="InterPro" id="IPR023214">
    <property type="entry name" value="HAD_sf"/>
</dbReference>
<dbReference type="InterPro" id="IPR027706">
    <property type="entry name" value="PGP_Pase"/>
</dbReference>
<dbReference type="InterPro" id="IPR010021">
    <property type="entry name" value="PGPP1/Gep4"/>
</dbReference>
<dbReference type="NCBIfam" id="TIGR01668">
    <property type="entry name" value="YqeG_hyp_ppase"/>
    <property type="match status" value="1"/>
</dbReference>
<dbReference type="PANTHER" id="PTHR19288">
    <property type="entry name" value="4-NITROPHENYLPHOSPHATASE-RELATED"/>
    <property type="match status" value="1"/>
</dbReference>
<dbReference type="PANTHER" id="PTHR19288:SF25">
    <property type="entry name" value="PHOSPHATIDYLGLYCEROPHOSPHATASE GEP4, MITOCHONDRIAL"/>
    <property type="match status" value="1"/>
</dbReference>
<dbReference type="Pfam" id="PF09419">
    <property type="entry name" value="PGP_phosphatase"/>
    <property type="match status" value="1"/>
</dbReference>
<dbReference type="SUPFAM" id="SSF56784">
    <property type="entry name" value="HAD-like"/>
    <property type="match status" value="1"/>
</dbReference>
<proteinExistence type="evidence at protein level"/>
<accession>P38812</accession>
<accession>D3DL50</accession>
<feature type="chain" id="PRO_0000202908" description="Phosphatidylglycerophosphatase GEP4, mitochondrial">
    <location>
        <begin position="1"/>
        <end position="185"/>
    </location>
</feature>
<feature type="short sequence motif" description="Phosphoryl acceptor">
    <location>
        <begin position="45"/>
        <end position="49"/>
    </location>
</feature>
<feature type="mutagenesis site" description="Abolishes phosphatase activity and impairs cardiolipin biosynthesis." evidence="3">
    <original>D</original>
    <variation>N</variation>
    <location>
        <position position="45"/>
    </location>
</feature>
<feature type="mutagenesis site" description="Abolishes phosphatase activity and impairs cardiolipin biosynthesis." evidence="3">
    <original>D</original>
    <variation>N</variation>
    <location>
        <position position="47"/>
    </location>
</feature>
<name>GEP4_YEAST</name>
<organism>
    <name type="scientific">Saccharomyces cerevisiae (strain ATCC 204508 / S288c)</name>
    <name type="common">Baker's yeast</name>
    <dbReference type="NCBI Taxonomy" id="559292"/>
    <lineage>
        <taxon>Eukaryota</taxon>
        <taxon>Fungi</taxon>
        <taxon>Dikarya</taxon>
        <taxon>Ascomycota</taxon>
        <taxon>Saccharomycotina</taxon>
        <taxon>Saccharomycetes</taxon>
        <taxon>Saccharomycetales</taxon>
        <taxon>Saccharomycetaceae</taxon>
        <taxon>Saccharomyces</taxon>
    </lineage>
</organism>
<sequence>MNISGTLNTLRLLYNPSLCKPSLVVPTFNDLPIPIHDSIKAVVLDKDNCIAFPHDDKIWPDYLQHWETLRSKYSNKALLIVSNTAGSNSDKDYSQAKLLEDKTGIPVLRHSTKKPGCHNEILDYFYRNKTITNPKEVAVVGDRLFTDILMANLMGSYGVWIRDGVKVSANPLSKFEKKLYNFLGF</sequence>
<comment type="function">
    <text evidence="2 3">Phosphatidylglycerophosphatase involved in the biosynthesis of cardiolipin (CL), a unique dimeric phosphoglycerolipid predominantly present in mitochondrial membranes and which has important functions for cellular energy metabolism, mitochondrial dynamics and the initiation of apoptotic pathways. Required for the stability of respiratory chain supercomplexes and for growth at elevated temperature, in presence of ethidium bromide or in absence of prohibitins.</text>
</comment>
<comment type="catalytic activity">
    <reaction>
        <text>a 1,2-diacyl-sn-glycero-3-phospho-(1'-sn-glycero-3'-phosphate) + H2O = a 1,2-diacyl-sn-glycero-3-phospho-(1'-sn-glycerol) + phosphate</text>
        <dbReference type="Rhea" id="RHEA:33751"/>
        <dbReference type="ChEBI" id="CHEBI:15377"/>
        <dbReference type="ChEBI" id="CHEBI:43474"/>
        <dbReference type="ChEBI" id="CHEBI:60110"/>
        <dbReference type="ChEBI" id="CHEBI:64716"/>
        <dbReference type="EC" id="3.1.3.27"/>
    </reaction>
</comment>
<comment type="pathway">
    <text>Phospholipid metabolism; phosphatidylglycerol biosynthesis; phosphatidylglycerol from CDP-diacylglycerol: step 2/2.</text>
</comment>
<comment type="subcellular location">
    <subcellularLocation>
        <location evidence="1 3">Mitochondrion inner membrane</location>
        <topology evidence="1 3">Peripheral membrane protein</topology>
        <orientation evidence="1 3">Matrix side</orientation>
    </subcellularLocation>
</comment>
<comment type="similarity">
    <text evidence="4">Belongs to the GEP4 family.</text>
</comment>
<gene>
    <name type="primary">GEP4</name>
    <name type="ordered locus">YHR100C</name>
</gene>
<evidence type="ECO:0000269" key="1">
    <source>
    </source>
</evidence>
<evidence type="ECO:0000269" key="2">
    <source>
    </source>
</evidence>
<evidence type="ECO:0000269" key="3">
    <source>
    </source>
</evidence>
<evidence type="ECO:0000305" key="4"/>
<keyword id="KW-0378">Hydrolase</keyword>
<keyword id="KW-0444">Lipid biosynthesis</keyword>
<keyword id="KW-0443">Lipid metabolism</keyword>
<keyword id="KW-0472">Membrane</keyword>
<keyword id="KW-0496">Mitochondrion</keyword>
<keyword id="KW-0999">Mitochondrion inner membrane</keyword>
<keyword id="KW-0594">Phospholipid biosynthesis</keyword>
<keyword id="KW-1208">Phospholipid metabolism</keyword>
<keyword id="KW-1185">Reference proteome</keyword>